<name>RL10_BACC2</name>
<evidence type="ECO:0000255" key="1">
    <source>
        <dbReference type="HAMAP-Rule" id="MF_00362"/>
    </source>
</evidence>
<evidence type="ECO:0000305" key="2"/>
<accession>B7IT08</accession>
<keyword id="KW-0687">Ribonucleoprotein</keyword>
<keyword id="KW-0689">Ribosomal protein</keyword>
<keyword id="KW-0694">RNA-binding</keyword>
<keyword id="KW-0699">rRNA-binding</keyword>
<dbReference type="EMBL" id="CP001186">
    <property type="protein sequence ID" value="ACK96520.1"/>
    <property type="molecule type" value="Genomic_DNA"/>
</dbReference>
<dbReference type="RefSeq" id="WP_000048717.1">
    <property type="nucleotide sequence ID" value="NC_011772.1"/>
</dbReference>
<dbReference type="SMR" id="B7IT08"/>
<dbReference type="KEGG" id="bcg:BCG9842_B5206"/>
<dbReference type="HOGENOM" id="CLU_092227_2_0_9"/>
<dbReference type="Proteomes" id="UP000006744">
    <property type="component" value="Chromosome"/>
</dbReference>
<dbReference type="GO" id="GO:0015934">
    <property type="term" value="C:large ribosomal subunit"/>
    <property type="evidence" value="ECO:0007669"/>
    <property type="project" value="InterPro"/>
</dbReference>
<dbReference type="GO" id="GO:0070180">
    <property type="term" value="F:large ribosomal subunit rRNA binding"/>
    <property type="evidence" value="ECO:0007669"/>
    <property type="project" value="UniProtKB-UniRule"/>
</dbReference>
<dbReference type="GO" id="GO:0003735">
    <property type="term" value="F:structural constituent of ribosome"/>
    <property type="evidence" value="ECO:0007669"/>
    <property type="project" value="InterPro"/>
</dbReference>
<dbReference type="GO" id="GO:0006412">
    <property type="term" value="P:translation"/>
    <property type="evidence" value="ECO:0007669"/>
    <property type="project" value="UniProtKB-UniRule"/>
</dbReference>
<dbReference type="CDD" id="cd05797">
    <property type="entry name" value="Ribosomal_L10"/>
    <property type="match status" value="1"/>
</dbReference>
<dbReference type="FunFam" id="3.30.70.1730:FF:000001">
    <property type="entry name" value="50S ribosomal protein L10"/>
    <property type="match status" value="1"/>
</dbReference>
<dbReference type="Gene3D" id="3.30.70.1730">
    <property type="match status" value="1"/>
</dbReference>
<dbReference type="Gene3D" id="6.10.250.290">
    <property type="match status" value="1"/>
</dbReference>
<dbReference type="HAMAP" id="MF_00362">
    <property type="entry name" value="Ribosomal_uL10"/>
    <property type="match status" value="1"/>
</dbReference>
<dbReference type="InterPro" id="IPR001790">
    <property type="entry name" value="Ribosomal_uL10"/>
</dbReference>
<dbReference type="InterPro" id="IPR043141">
    <property type="entry name" value="Ribosomal_uL10-like_sf"/>
</dbReference>
<dbReference type="InterPro" id="IPR022973">
    <property type="entry name" value="Ribosomal_uL10_bac"/>
</dbReference>
<dbReference type="InterPro" id="IPR047865">
    <property type="entry name" value="Ribosomal_uL10_bac_type"/>
</dbReference>
<dbReference type="InterPro" id="IPR002363">
    <property type="entry name" value="Ribosomal_uL10_CS_bac"/>
</dbReference>
<dbReference type="NCBIfam" id="NF000955">
    <property type="entry name" value="PRK00099.1-1"/>
    <property type="match status" value="1"/>
</dbReference>
<dbReference type="PANTHER" id="PTHR11560">
    <property type="entry name" value="39S RIBOSOMAL PROTEIN L10, MITOCHONDRIAL"/>
    <property type="match status" value="1"/>
</dbReference>
<dbReference type="Pfam" id="PF00466">
    <property type="entry name" value="Ribosomal_L10"/>
    <property type="match status" value="1"/>
</dbReference>
<dbReference type="SUPFAM" id="SSF160369">
    <property type="entry name" value="Ribosomal protein L10-like"/>
    <property type="match status" value="1"/>
</dbReference>
<dbReference type="PROSITE" id="PS01109">
    <property type="entry name" value="RIBOSOMAL_L10"/>
    <property type="match status" value="1"/>
</dbReference>
<protein>
    <recommendedName>
        <fullName evidence="1">Large ribosomal subunit protein uL10</fullName>
    </recommendedName>
    <alternativeName>
        <fullName evidence="2">50S ribosomal protein L10</fullName>
    </alternativeName>
</protein>
<feature type="chain" id="PRO_1000120914" description="Large ribosomal subunit protein uL10">
    <location>
        <begin position="1"/>
        <end position="166"/>
    </location>
</feature>
<comment type="function">
    <text evidence="1">Forms part of the ribosomal stalk, playing a central role in the interaction of the ribosome with GTP-bound translation factors.</text>
</comment>
<comment type="subunit">
    <text evidence="1">Part of the ribosomal stalk of the 50S ribosomal subunit. The N-terminus interacts with L11 and the large rRNA to form the base of the stalk. The C-terminus forms an elongated spine to which L12 dimers bind in a sequential fashion forming a multimeric L10(L12)X complex.</text>
</comment>
<comment type="similarity">
    <text evidence="1">Belongs to the universal ribosomal protein uL10 family.</text>
</comment>
<sequence>MSKVIETKQQVVTEIADKLRASKSTIVVDYRGLTVSEATELRKQLREAGVEFKVYKNSLTRRAAESAEMAELNEFLTGPNAIAFSNEDVVAPAKVLNDFAKNHEALEIKAGVIEGKLVTLDEVKAIATLPSREGLLSMLLSVLQAPIRNLALATKAVAEQKEEQGA</sequence>
<proteinExistence type="inferred from homology"/>
<organism>
    <name type="scientific">Bacillus cereus (strain G9842)</name>
    <dbReference type="NCBI Taxonomy" id="405531"/>
    <lineage>
        <taxon>Bacteria</taxon>
        <taxon>Bacillati</taxon>
        <taxon>Bacillota</taxon>
        <taxon>Bacilli</taxon>
        <taxon>Bacillales</taxon>
        <taxon>Bacillaceae</taxon>
        <taxon>Bacillus</taxon>
        <taxon>Bacillus cereus group</taxon>
    </lineage>
</organism>
<reference key="1">
    <citation type="submission" date="2008-10" db="EMBL/GenBank/DDBJ databases">
        <title>Genome sequence of Bacillus cereus G9842.</title>
        <authorList>
            <person name="Dodson R.J."/>
            <person name="Durkin A.S."/>
            <person name="Rosovitz M.J."/>
            <person name="Rasko D.A."/>
            <person name="Hoffmaster A."/>
            <person name="Ravel J."/>
            <person name="Sutton G."/>
        </authorList>
    </citation>
    <scope>NUCLEOTIDE SEQUENCE [LARGE SCALE GENOMIC DNA]</scope>
    <source>
        <strain>G9842</strain>
    </source>
</reference>
<gene>
    <name evidence="1" type="primary">rplJ</name>
    <name type="ordered locus">BCG9842_B5206</name>
</gene>